<gene>
    <name evidence="1" type="primary">dapL</name>
    <name type="ordered locus">DVU_1655</name>
</gene>
<proteinExistence type="inferred from homology"/>
<accession>Q72BI1</accession>
<evidence type="ECO:0000255" key="1">
    <source>
        <dbReference type="HAMAP-Rule" id="MF_01642"/>
    </source>
</evidence>
<name>DAPAT_NITV2</name>
<dbReference type="EC" id="2.6.1.83" evidence="1"/>
<dbReference type="EMBL" id="AE017285">
    <property type="protein sequence ID" value="AAS96132.1"/>
    <property type="molecule type" value="Genomic_DNA"/>
</dbReference>
<dbReference type="RefSeq" id="WP_010938944.1">
    <property type="nucleotide sequence ID" value="NC_002937.3"/>
</dbReference>
<dbReference type="RefSeq" id="YP_010873.1">
    <property type="nucleotide sequence ID" value="NC_002937.3"/>
</dbReference>
<dbReference type="SMR" id="Q72BI1"/>
<dbReference type="STRING" id="882.DVU_1655"/>
<dbReference type="PaxDb" id="882-DVU_1655"/>
<dbReference type="EnsemblBacteria" id="AAS96132">
    <property type="protein sequence ID" value="AAS96132"/>
    <property type="gene ID" value="DVU_1655"/>
</dbReference>
<dbReference type="KEGG" id="dvu:DVU_1655"/>
<dbReference type="PATRIC" id="fig|882.5.peg.1529"/>
<dbReference type="eggNOG" id="COG0436">
    <property type="taxonomic scope" value="Bacteria"/>
</dbReference>
<dbReference type="HOGENOM" id="CLU_017584_4_5_7"/>
<dbReference type="OrthoDB" id="9804474at2"/>
<dbReference type="PhylomeDB" id="Q72BI1"/>
<dbReference type="UniPathway" id="UPA00034">
    <property type="reaction ID" value="UER00466"/>
</dbReference>
<dbReference type="Proteomes" id="UP000002194">
    <property type="component" value="Chromosome"/>
</dbReference>
<dbReference type="GO" id="GO:0010285">
    <property type="term" value="F:L,L-diaminopimelate aminotransferase activity"/>
    <property type="evidence" value="ECO:0007669"/>
    <property type="project" value="UniProtKB-EC"/>
</dbReference>
<dbReference type="GO" id="GO:0030170">
    <property type="term" value="F:pyridoxal phosphate binding"/>
    <property type="evidence" value="ECO:0007669"/>
    <property type="project" value="InterPro"/>
</dbReference>
<dbReference type="GO" id="GO:0009089">
    <property type="term" value="P:lysine biosynthetic process via diaminopimelate"/>
    <property type="evidence" value="ECO:0007669"/>
    <property type="project" value="UniProtKB-UniPathway"/>
</dbReference>
<dbReference type="CDD" id="cd00609">
    <property type="entry name" value="AAT_like"/>
    <property type="match status" value="1"/>
</dbReference>
<dbReference type="Gene3D" id="3.90.1150.10">
    <property type="entry name" value="Aspartate Aminotransferase, domain 1"/>
    <property type="match status" value="1"/>
</dbReference>
<dbReference type="Gene3D" id="3.40.640.10">
    <property type="entry name" value="Type I PLP-dependent aspartate aminotransferase-like (Major domain)"/>
    <property type="match status" value="1"/>
</dbReference>
<dbReference type="HAMAP" id="MF_01642">
    <property type="entry name" value="DapL_aminotrans_1"/>
    <property type="match status" value="1"/>
</dbReference>
<dbReference type="InterPro" id="IPR004839">
    <property type="entry name" value="Aminotransferase_I/II_large"/>
</dbReference>
<dbReference type="InterPro" id="IPR019881">
    <property type="entry name" value="DAP-NH2Trfase_DapL_Desulfo"/>
</dbReference>
<dbReference type="InterPro" id="IPR019942">
    <property type="entry name" value="DapL/ALD1"/>
</dbReference>
<dbReference type="InterPro" id="IPR050881">
    <property type="entry name" value="LL-DAP_aminotransferase"/>
</dbReference>
<dbReference type="InterPro" id="IPR004838">
    <property type="entry name" value="NHTrfase_class1_PyrdxlP-BS"/>
</dbReference>
<dbReference type="InterPro" id="IPR015424">
    <property type="entry name" value="PyrdxlP-dep_Trfase"/>
</dbReference>
<dbReference type="InterPro" id="IPR015421">
    <property type="entry name" value="PyrdxlP-dep_Trfase_major"/>
</dbReference>
<dbReference type="InterPro" id="IPR015422">
    <property type="entry name" value="PyrdxlP-dep_Trfase_small"/>
</dbReference>
<dbReference type="NCBIfam" id="TIGR03540">
    <property type="entry name" value="DapC_direct"/>
    <property type="match status" value="1"/>
</dbReference>
<dbReference type="NCBIfam" id="NF006756">
    <property type="entry name" value="PRK09276.1"/>
    <property type="match status" value="1"/>
</dbReference>
<dbReference type="PANTHER" id="PTHR42832">
    <property type="entry name" value="AMINO ACID AMINOTRANSFERASE"/>
    <property type="match status" value="1"/>
</dbReference>
<dbReference type="PANTHER" id="PTHR42832:SF3">
    <property type="entry name" value="L-GLUTAMINE--4-(METHYLSULFANYL)-2-OXOBUTANOATE AMINOTRANSFERASE"/>
    <property type="match status" value="1"/>
</dbReference>
<dbReference type="Pfam" id="PF00155">
    <property type="entry name" value="Aminotran_1_2"/>
    <property type="match status" value="1"/>
</dbReference>
<dbReference type="SUPFAM" id="SSF53383">
    <property type="entry name" value="PLP-dependent transferases"/>
    <property type="match status" value="1"/>
</dbReference>
<dbReference type="PROSITE" id="PS00105">
    <property type="entry name" value="AA_TRANSFER_CLASS_1"/>
    <property type="match status" value="1"/>
</dbReference>
<sequence length="388" mass="42665">MAAFKLADRLATLPPYLFAGIDKVKAEVAARGVDIISLGIGDPDMATPGFIIEAMKEAIARPANHQYPSYVGMLAFRQEVANWYDRRFGVSLDPATEVIGLIGSKEGIAHFPFAFINPGDLVLVCTPNYPVYHIATGFAGGEVQFVPLLEENDFLPDLDAIPEDTWKRAKMIFVNYPNNPTAATAPLGFYEKLVDICRRFDVIIAHDTAYTEIYYDEDNRPPSILSVPGAKDVAIEFHSLSKTYNMTGWRVGMAVGNPTLVAGLGKIKENMDSGIFQAVQEASIVALRDGDDFCRELRGIYRQRRDTVINALHKAGIQCRVPQATFYVWARVPQGHTSADFVTRVLQETGVVVTPGNGFGTPGEGFFRISLTVDNARLEEAVSRIAKL</sequence>
<comment type="function">
    <text evidence="1">Involved in the synthesis of meso-diaminopimelate (m-DAP or DL-DAP), required for both lysine and peptidoglycan biosynthesis. Catalyzes the direct conversion of tetrahydrodipicolinate to LL-diaminopimelate.</text>
</comment>
<comment type="catalytic activity">
    <reaction evidence="1">
        <text>(2S,6S)-2,6-diaminopimelate + 2-oxoglutarate = (S)-2,3,4,5-tetrahydrodipicolinate + L-glutamate + H2O + H(+)</text>
        <dbReference type="Rhea" id="RHEA:23988"/>
        <dbReference type="ChEBI" id="CHEBI:15377"/>
        <dbReference type="ChEBI" id="CHEBI:15378"/>
        <dbReference type="ChEBI" id="CHEBI:16810"/>
        <dbReference type="ChEBI" id="CHEBI:16845"/>
        <dbReference type="ChEBI" id="CHEBI:29985"/>
        <dbReference type="ChEBI" id="CHEBI:57609"/>
        <dbReference type="EC" id="2.6.1.83"/>
    </reaction>
</comment>
<comment type="cofactor">
    <cofactor evidence="1">
        <name>pyridoxal 5'-phosphate</name>
        <dbReference type="ChEBI" id="CHEBI:597326"/>
    </cofactor>
</comment>
<comment type="pathway">
    <text evidence="1">Amino-acid biosynthesis; L-lysine biosynthesis via DAP pathway; LL-2,6-diaminopimelate from (S)-tetrahydrodipicolinate (aminotransferase route): step 1/1.</text>
</comment>
<comment type="subunit">
    <text evidence="1">Homodimer.</text>
</comment>
<comment type="similarity">
    <text evidence="1">Belongs to the class-I pyridoxal-phosphate-dependent aminotransferase family. LL-diaminopimelate aminotransferase subfamily.</text>
</comment>
<reference key="1">
    <citation type="journal article" date="2004" name="Nat. Biotechnol.">
        <title>The genome sequence of the anaerobic, sulfate-reducing bacterium Desulfovibrio vulgaris Hildenborough.</title>
        <authorList>
            <person name="Heidelberg J.F."/>
            <person name="Seshadri R."/>
            <person name="Haveman S.A."/>
            <person name="Hemme C.L."/>
            <person name="Paulsen I.T."/>
            <person name="Kolonay J.F."/>
            <person name="Eisen J.A."/>
            <person name="Ward N.L."/>
            <person name="Methe B.A."/>
            <person name="Brinkac L.M."/>
            <person name="Daugherty S.C."/>
            <person name="DeBoy R.T."/>
            <person name="Dodson R.J."/>
            <person name="Durkin A.S."/>
            <person name="Madupu R."/>
            <person name="Nelson W.C."/>
            <person name="Sullivan S.A."/>
            <person name="Fouts D.E."/>
            <person name="Haft D.H."/>
            <person name="Selengut J."/>
            <person name="Peterson J.D."/>
            <person name="Davidsen T.M."/>
            <person name="Zafar N."/>
            <person name="Zhou L."/>
            <person name="Radune D."/>
            <person name="Dimitrov G."/>
            <person name="Hance M."/>
            <person name="Tran K."/>
            <person name="Khouri H.M."/>
            <person name="Gill J."/>
            <person name="Utterback T.R."/>
            <person name="Feldblyum T.V."/>
            <person name="Wall J.D."/>
            <person name="Voordouw G."/>
            <person name="Fraser C.M."/>
        </authorList>
    </citation>
    <scope>NUCLEOTIDE SEQUENCE [LARGE SCALE GENOMIC DNA]</scope>
    <source>
        <strain>ATCC 29579 / DSM 644 / CCUG 34227 / NCIMB 8303 / VKM B-1760 / Hildenborough</strain>
    </source>
</reference>
<protein>
    <recommendedName>
        <fullName evidence="1">LL-diaminopimelate aminotransferase</fullName>
        <shortName evidence="1">DAP-AT</shortName>
        <shortName evidence="1">DAP-aminotransferase</shortName>
        <shortName evidence="1">LL-DAP-aminotransferase</shortName>
        <ecNumber evidence="1">2.6.1.83</ecNumber>
    </recommendedName>
</protein>
<keyword id="KW-0032">Aminotransferase</keyword>
<keyword id="KW-0663">Pyridoxal phosphate</keyword>
<keyword id="KW-1185">Reference proteome</keyword>
<keyword id="KW-0808">Transferase</keyword>
<organism>
    <name type="scientific">Nitratidesulfovibrio vulgaris (strain ATCC 29579 / DSM 644 / CCUG 34227 / NCIMB 8303 / VKM B-1760 / Hildenborough)</name>
    <name type="common">Desulfovibrio vulgaris</name>
    <dbReference type="NCBI Taxonomy" id="882"/>
    <lineage>
        <taxon>Bacteria</taxon>
        <taxon>Pseudomonadati</taxon>
        <taxon>Thermodesulfobacteriota</taxon>
        <taxon>Desulfovibrionia</taxon>
        <taxon>Desulfovibrionales</taxon>
        <taxon>Desulfovibrionaceae</taxon>
        <taxon>Nitratidesulfovibrio</taxon>
    </lineage>
</organism>
<feature type="chain" id="PRO_0000342236" description="LL-diaminopimelate aminotransferase">
    <location>
        <begin position="1"/>
        <end position="388"/>
    </location>
</feature>
<feature type="binding site" evidence="1">
    <location>
        <position position="16"/>
    </location>
    <ligand>
        <name>substrate</name>
    </ligand>
</feature>
<feature type="binding site" evidence="1">
    <location>
        <position position="41"/>
    </location>
    <ligand>
        <name>substrate</name>
    </ligand>
</feature>
<feature type="binding site" evidence="1">
    <location>
        <position position="70"/>
    </location>
    <ligand>
        <name>pyridoxal 5'-phosphate</name>
        <dbReference type="ChEBI" id="CHEBI:597326"/>
    </ligand>
</feature>
<feature type="binding site" evidence="1">
    <location>
        <begin position="104"/>
        <end position="105"/>
    </location>
    <ligand>
        <name>pyridoxal 5'-phosphate</name>
        <dbReference type="ChEBI" id="CHEBI:597326"/>
    </ligand>
</feature>
<feature type="binding site" evidence="1">
    <location>
        <position position="105"/>
    </location>
    <ligand>
        <name>substrate</name>
    </ligand>
</feature>
<feature type="binding site" evidence="1">
    <location>
        <position position="129"/>
    </location>
    <ligand>
        <name>pyridoxal 5'-phosphate</name>
        <dbReference type="ChEBI" id="CHEBI:597326"/>
    </ligand>
</feature>
<feature type="binding site" evidence="1">
    <location>
        <position position="129"/>
    </location>
    <ligand>
        <name>substrate</name>
    </ligand>
</feature>
<feature type="binding site" evidence="1">
    <location>
        <position position="179"/>
    </location>
    <ligand>
        <name>pyridoxal 5'-phosphate</name>
        <dbReference type="ChEBI" id="CHEBI:597326"/>
    </ligand>
</feature>
<feature type="binding site" evidence="1">
    <location>
        <position position="179"/>
    </location>
    <ligand>
        <name>substrate</name>
    </ligand>
</feature>
<feature type="binding site" evidence="1">
    <location>
        <position position="210"/>
    </location>
    <ligand>
        <name>pyridoxal 5'-phosphate</name>
        <dbReference type="ChEBI" id="CHEBI:597326"/>
    </ligand>
</feature>
<feature type="binding site" evidence="1">
    <location>
        <begin position="239"/>
        <end position="241"/>
    </location>
    <ligand>
        <name>pyridoxal 5'-phosphate</name>
        <dbReference type="ChEBI" id="CHEBI:597326"/>
    </ligand>
</feature>
<feature type="binding site" evidence="1">
    <location>
        <position position="250"/>
    </location>
    <ligand>
        <name>pyridoxal 5'-phosphate</name>
        <dbReference type="ChEBI" id="CHEBI:597326"/>
    </ligand>
</feature>
<feature type="binding site" evidence="1">
    <location>
        <position position="368"/>
    </location>
    <ligand>
        <name>substrate</name>
    </ligand>
</feature>
<feature type="modified residue" description="N6-(pyridoxal phosphate)lysine" evidence="1">
    <location>
        <position position="242"/>
    </location>
</feature>